<keyword id="KW-0067">ATP-binding</keyword>
<keyword id="KW-0963">Cytoplasm</keyword>
<keyword id="KW-0347">Helicase</keyword>
<keyword id="KW-0378">Hydrolase</keyword>
<keyword id="KW-0396">Initiation factor</keyword>
<keyword id="KW-0547">Nucleotide-binding</keyword>
<keyword id="KW-0648">Protein biosynthesis</keyword>
<keyword id="KW-1185">Reference proteome</keyword>
<keyword id="KW-0694">RNA-binding</keyword>
<name>IF4A_ENCCU</name>
<proteinExistence type="evidence at protein level"/>
<organism>
    <name type="scientific">Encephalitozoon cuniculi (strain GB-M1)</name>
    <name type="common">Microsporidian parasite</name>
    <dbReference type="NCBI Taxonomy" id="284813"/>
    <lineage>
        <taxon>Eukaryota</taxon>
        <taxon>Fungi</taxon>
        <taxon>Fungi incertae sedis</taxon>
        <taxon>Microsporidia</taxon>
        <taxon>Unikaryonidae</taxon>
        <taxon>Encephalitozoon</taxon>
    </lineage>
</organism>
<sequence>MKQVTEQAEDFVDTRSSGTEIREFEDLRSDSSQIRMFDTWEDYGLKEDLLKGIYSIGFETPSFIQKAAIQPIIDGRDIRAQAQSGTGKTGAFAVAALQICDMSQDVTQILVLASTREIAAQNAARFEDLGCFMGARVALLSGGSPIAADKVALEKKPHIVVGTPGRVEHMININELSMDNIKLFVIDEADEMLKAGFQEQVKSIFRRITNKDEVQIAMFSATYDEEELRVSEEILINPVIIDLRYNDQTLKGIRQYFIDLRKEPPFRKGREDYLLPKLVTLYDIFRKQRLGQSIVFINSKEDARIVYDWLIRHEWECELISAELTQAERERTLNRFRGGTGRCLISSGLLSRGIDIQNLSVVFCLDVPSFERKSTYIHRIGRSGRYGRKGIAINIVYEHELKNLKAIERFYNTTIKELPADFSFQ</sequence>
<reference key="1">
    <citation type="journal article" date="2001" name="Nature">
        <title>Genome sequence and gene compaction of the eukaryote parasite Encephalitozoon cuniculi.</title>
        <authorList>
            <person name="Katinka M.D."/>
            <person name="Duprat S."/>
            <person name="Cornillot E."/>
            <person name="Metenier G."/>
            <person name="Thomarat F."/>
            <person name="Prensier G."/>
            <person name="Barbe V."/>
            <person name="Peyretaillade E."/>
            <person name="Brottier P."/>
            <person name="Wincker P."/>
            <person name="Delbac F."/>
            <person name="El Alaoui H."/>
            <person name="Peyret P."/>
            <person name="Saurin W."/>
            <person name="Gouy M."/>
            <person name="Weissenbach J."/>
            <person name="Vivares C.P."/>
        </authorList>
    </citation>
    <scope>NUCLEOTIDE SEQUENCE [LARGE SCALE GENOMIC DNA]</scope>
    <source>
        <strain>GB-M1</strain>
    </source>
</reference>
<reference key="2">
    <citation type="journal article" date="2006" name="Proteomics">
        <title>Proteomic analysis of the eukaryotic parasite Encephalitozoon cuniculi (microsporidia): a reference map for proteins expressed in late sporogonial stages.</title>
        <authorList>
            <person name="Brosson D."/>
            <person name="Kuhn L."/>
            <person name="Delbac F."/>
            <person name="Garin J."/>
            <person name="Vivares C.P."/>
            <person name="Texier C."/>
        </authorList>
    </citation>
    <scope>IDENTIFICATION BY MASS SPECTROMETRY [LARGE SCALE ANALYSIS]</scope>
    <scope>DEVELOPMENTAL STAGE</scope>
</reference>
<evidence type="ECO:0000250" key="1"/>
<evidence type="ECO:0000255" key="2">
    <source>
        <dbReference type="PROSITE-ProRule" id="PRU00541"/>
    </source>
</evidence>
<evidence type="ECO:0000255" key="3">
    <source>
        <dbReference type="PROSITE-ProRule" id="PRU00542"/>
    </source>
</evidence>
<evidence type="ECO:0000269" key="4">
    <source>
    </source>
</evidence>
<evidence type="ECO:0000305" key="5"/>
<feature type="chain" id="PRO_0000255981" description="ATP-dependent RNA helicase eIF4A">
    <location>
        <begin position="1"/>
        <end position="425"/>
    </location>
</feature>
<feature type="domain" description="Helicase ATP-binding" evidence="2">
    <location>
        <begin position="69"/>
        <end position="241"/>
    </location>
</feature>
<feature type="domain" description="Helicase C-terminal" evidence="3">
    <location>
        <begin position="252"/>
        <end position="425"/>
    </location>
</feature>
<feature type="short sequence motif" description="Q motif">
    <location>
        <begin position="38"/>
        <end position="66"/>
    </location>
</feature>
<feature type="short sequence motif" description="DEAD box">
    <location>
        <begin position="187"/>
        <end position="190"/>
    </location>
</feature>
<feature type="binding site" evidence="2">
    <location>
        <begin position="82"/>
        <end position="89"/>
    </location>
    <ligand>
        <name>ATP</name>
        <dbReference type="ChEBI" id="CHEBI:30616"/>
    </ligand>
</feature>
<comment type="function">
    <text evidence="1">ATP-dependent RNA helicase which is a subunit of the eIF4F complex involved in cap recognition and is required for mRNA binding to ribosome. In the current model of translation initiation, eIF4A unwinds RNA secondary structures in the 5'-UTR of mRNAs which is necessary to allow efficient binding of the small ribosomal subunit, and subsequent scanning for the initiator codon (By similarity).</text>
</comment>
<comment type="catalytic activity">
    <reaction>
        <text>ATP + H2O = ADP + phosphate + H(+)</text>
        <dbReference type="Rhea" id="RHEA:13065"/>
        <dbReference type="ChEBI" id="CHEBI:15377"/>
        <dbReference type="ChEBI" id="CHEBI:15378"/>
        <dbReference type="ChEBI" id="CHEBI:30616"/>
        <dbReference type="ChEBI" id="CHEBI:43474"/>
        <dbReference type="ChEBI" id="CHEBI:456216"/>
        <dbReference type="EC" id="3.6.4.13"/>
    </reaction>
</comment>
<comment type="subunit">
    <text evidence="1">Component of the eIF4F complex, which composition varies with external and internal environmental conditions. It is composed of at least eIF4A, eIF4E and eIF4G (By similarity).</text>
</comment>
<comment type="subcellular location">
    <subcellularLocation>
        <location evidence="1">Cytoplasm</location>
    </subcellularLocation>
</comment>
<comment type="developmental stage">
    <text evidence="4">Expressed in late sporogonial stages.</text>
</comment>
<comment type="domain">
    <text>The Q motif is unique to and characteristic of the DEAD box family of RNA helicases and controls ATP binding and hydrolysis.</text>
</comment>
<comment type="similarity">
    <text evidence="5">Belongs to the DEAD box helicase family. eIF4A subfamily.</text>
</comment>
<protein>
    <recommendedName>
        <fullName>ATP-dependent RNA helicase eIF4A</fullName>
        <ecNumber>3.6.4.13</ecNumber>
    </recommendedName>
    <alternativeName>
        <fullName>Eukaryotic initiation factor 4A</fullName>
        <shortName>eIF-4A</shortName>
    </alternativeName>
    <alternativeName>
        <fullName>Translation initiation factor 1</fullName>
    </alternativeName>
</protein>
<gene>
    <name type="primary">TIF1</name>
    <name type="synonym">TIF41</name>
    <name type="ordered locus">ECU09_1200</name>
</gene>
<accession>Q8SQM5</accession>
<dbReference type="EC" id="3.6.4.13"/>
<dbReference type="EMBL" id="AL590451">
    <property type="protein sequence ID" value="CAD27090.1"/>
    <property type="molecule type" value="Genomic_DNA"/>
</dbReference>
<dbReference type="RefSeq" id="XP_955671.1">
    <property type="nucleotide sequence ID" value="XM_950578.1"/>
</dbReference>
<dbReference type="SMR" id="Q8SQM5"/>
<dbReference type="FunCoup" id="Q8SQM5">
    <property type="interactions" value="347"/>
</dbReference>
<dbReference type="STRING" id="284813.Q8SQM5"/>
<dbReference type="VEuPathDB" id="MicrosporidiaDB:ECU09_1200"/>
<dbReference type="HOGENOM" id="CLU_003041_1_0_1"/>
<dbReference type="InParanoid" id="Q8SQM5"/>
<dbReference type="OMA" id="PENYMHR"/>
<dbReference type="OrthoDB" id="10265785at2759"/>
<dbReference type="Proteomes" id="UP000000819">
    <property type="component" value="Chromosome IX"/>
</dbReference>
<dbReference type="GO" id="GO:0005829">
    <property type="term" value="C:cytosol"/>
    <property type="evidence" value="ECO:0007669"/>
    <property type="project" value="TreeGrafter"/>
</dbReference>
<dbReference type="GO" id="GO:0005524">
    <property type="term" value="F:ATP binding"/>
    <property type="evidence" value="ECO:0007669"/>
    <property type="project" value="UniProtKB-KW"/>
</dbReference>
<dbReference type="GO" id="GO:0016887">
    <property type="term" value="F:ATP hydrolysis activity"/>
    <property type="evidence" value="ECO:0007669"/>
    <property type="project" value="RHEA"/>
</dbReference>
<dbReference type="GO" id="GO:0003723">
    <property type="term" value="F:RNA binding"/>
    <property type="evidence" value="ECO:0007669"/>
    <property type="project" value="UniProtKB-KW"/>
</dbReference>
<dbReference type="GO" id="GO:0003724">
    <property type="term" value="F:RNA helicase activity"/>
    <property type="evidence" value="ECO:0007669"/>
    <property type="project" value="UniProtKB-EC"/>
</dbReference>
<dbReference type="GO" id="GO:0003743">
    <property type="term" value="F:translation initiation factor activity"/>
    <property type="evidence" value="ECO:0007669"/>
    <property type="project" value="UniProtKB-KW"/>
</dbReference>
<dbReference type="CDD" id="cd17939">
    <property type="entry name" value="DEADc_EIF4A"/>
    <property type="match status" value="1"/>
</dbReference>
<dbReference type="CDD" id="cd18787">
    <property type="entry name" value="SF2_C_DEAD"/>
    <property type="match status" value="1"/>
</dbReference>
<dbReference type="Gene3D" id="3.40.50.300">
    <property type="entry name" value="P-loop containing nucleotide triphosphate hydrolases"/>
    <property type="match status" value="2"/>
</dbReference>
<dbReference type="InterPro" id="IPR011545">
    <property type="entry name" value="DEAD/DEAH_box_helicase_dom"/>
</dbReference>
<dbReference type="InterPro" id="IPR050079">
    <property type="entry name" value="DEAD_box_RNA_helicase"/>
</dbReference>
<dbReference type="InterPro" id="IPR014001">
    <property type="entry name" value="Helicase_ATP-bd"/>
</dbReference>
<dbReference type="InterPro" id="IPR001650">
    <property type="entry name" value="Helicase_C-like"/>
</dbReference>
<dbReference type="InterPro" id="IPR027417">
    <property type="entry name" value="P-loop_NTPase"/>
</dbReference>
<dbReference type="InterPro" id="IPR000629">
    <property type="entry name" value="RNA-helicase_DEAD-box_CS"/>
</dbReference>
<dbReference type="InterPro" id="IPR014014">
    <property type="entry name" value="RNA_helicase_DEAD_Q_motif"/>
</dbReference>
<dbReference type="PANTHER" id="PTHR47959:SF1">
    <property type="entry name" value="ATP-DEPENDENT RNA HELICASE DBPA"/>
    <property type="match status" value="1"/>
</dbReference>
<dbReference type="PANTHER" id="PTHR47959">
    <property type="entry name" value="ATP-DEPENDENT RNA HELICASE RHLE-RELATED"/>
    <property type="match status" value="1"/>
</dbReference>
<dbReference type="Pfam" id="PF00270">
    <property type="entry name" value="DEAD"/>
    <property type="match status" value="1"/>
</dbReference>
<dbReference type="Pfam" id="PF00271">
    <property type="entry name" value="Helicase_C"/>
    <property type="match status" value="1"/>
</dbReference>
<dbReference type="SMART" id="SM00487">
    <property type="entry name" value="DEXDc"/>
    <property type="match status" value="1"/>
</dbReference>
<dbReference type="SMART" id="SM00490">
    <property type="entry name" value="HELICc"/>
    <property type="match status" value="1"/>
</dbReference>
<dbReference type="SUPFAM" id="SSF52540">
    <property type="entry name" value="P-loop containing nucleoside triphosphate hydrolases"/>
    <property type="match status" value="1"/>
</dbReference>
<dbReference type="PROSITE" id="PS00039">
    <property type="entry name" value="DEAD_ATP_HELICASE"/>
    <property type="match status" value="1"/>
</dbReference>
<dbReference type="PROSITE" id="PS51192">
    <property type="entry name" value="HELICASE_ATP_BIND_1"/>
    <property type="match status" value="1"/>
</dbReference>
<dbReference type="PROSITE" id="PS51194">
    <property type="entry name" value="HELICASE_CTER"/>
    <property type="match status" value="1"/>
</dbReference>
<dbReference type="PROSITE" id="PS51195">
    <property type="entry name" value="Q_MOTIF"/>
    <property type="match status" value="1"/>
</dbReference>